<keyword id="KW-0227">DNA damage</keyword>
<keyword id="KW-0233">DNA recombination</keyword>
<keyword id="KW-0234">DNA repair</keyword>
<keyword id="KW-1185">Reference proteome</keyword>
<reference key="1">
    <citation type="journal article" date="1995" name="Science">
        <title>Whole-genome random sequencing and assembly of Haemophilus influenzae Rd.</title>
        <authorList>
            <person name="Fleischmann R.D."/>
            <person name="Adams M.D."/>
            <person name="White O."/>
            <person name="Clayton R.A."/>
            <person name="Kirkness E.F."/>
            <person name="Kerlavage A.R."/>
            <person name="Bult C.J."/>
            <person name="Tomb J.-F."/>
            <person name="Dougherty B.A."/>
            <person name="Merrick J.M."/>
            <person name="McKenney K."/>
            <person name="Sutton G.G."/>
            <person name="FitzHugh W."/>
            <person name="Fields C.A."/>
            <person name="Gocayne J.D."/>
            <person name="Scott J.D."/>
            <person name="Shirley R."/>
            <person name="Liu L.-I."/>
            <person name="Glodek A."/>
            <person name="Kelley J.M."/>
            <person name="Weidman J.F."/>
            <person name="Phillips C.A."/>
            <person name="Spriggs T."/>
            <person name="Hedblom E."/>
            <person name="Cotton M.D."/>
            <person name="Utterback T.R."/>
            <person name="Hanna M.C."/>
            <person name="Nguyen D.T."/>
            <person name="Saudek D.M."/>
            <person name="Brandon R.C."/>
            <person name="Fine L.D."/>
            <person name="Fritchman J.L."/>
            <person name="Fuhrmann J.L."/>
            <person name="Geoghagen N.S.M."/>
            <person name="Gnehm C.L."/>
            <person name="McDonald L.A."/>
            <person name="Small K.V."/>
            <person name="Fraser C.M."/>
            <person name="Smith H.O."/>
            <person name="Venter J.C."/>
        </authorList>
    </citation>
    <scope>NUCLEOTIDE SEQUENCE [LARGE SCALE GENOMIC DNA]</scope>
    <source>
        <strain>ATCC 51907 / DSM 11121 / KW20 / Rd</strain>
    </source>
</reference>
<reference key="2">
    <citation type="journal article" date="1995" name="Mol. Microbiol.">
        <title>Identification and characterization of a cell envelope protein of Haemophilus influenzae contributing to phase variation in colony opacity and nasopharyngeal colonization.</title>
        <authorList>
            <person name="Weiser J.N."/>
            <person name="Chong S.T."/>
            <person name="Greenberg D."/>
            <person name="Fong W."/>
        </authorList>
    </citation>
    <scope>NUCLEOTIDE SEQUENCE [GENOMIC DNA] OF 1-99</scope>
    <source>
        <strain>Rd / H175</strain>
    </source>
</reference>
<gene>
    <name type="primary">recO</name>
    <name type="ordered locus">HI_0332</name>
</gene>
<organism>
    <name type="scientific">Haemophilus influenzae (strain ATCC 51907 / DSM 11121 / KW20 / Rd)</name>
    <dbReference type="NCBI Taxonomy" id="71421"/>
    <lineage>
        <taxon>Bacteria</taxon>
        <taxon>Pseudomonadati</taxon>
        <taxon>Pseudomonadota</taxon>
        <taxon>Gammaproteobacteria</taxon>
        <taxon>Pasteurellales</taxon>
        <taxon>Pasteurellaceae</taxon>
        <taxon>Haemophilus</taxon>
    </lineage>
</organism>
<proteinExistence type="inferred from homology"/>
<dbReference type="EMBL" id="L42023">
    <property type="protein sequence ID" value="AAC21994.1"/>
    <property type="molecule type" value="Genomic_DNA"/>
</dbReference>
<dbReference type="EMBL" id="U17037">
    <property type="protein sequence ID" value="AAA56763.1"/>
    <property type="molecule type" value="Genomic_DNA"/>
</dbReference>
<dbReference type="PIR" id="C64062">
    <property type="entry name" value="C64062"/>
</dbReference>
<dbReference type="RefSeq" id="NP_438496.1">
    <property type="nucleotide sequence ID" value="NC_000907.1"/>
</dbReference>
<dbReference type="SMR" id="P44642"/>
<dbReference type="STRING" id="71421.HI_0332"/>
<dbReference type="EnsemblBacteria" id="AAC21994">
    <property type="protein sequence ID" value="AAC21994"/>
    <property type="gene ID" value="HI_0332"/>
</dbReference>
<dbReference type="KEGG" id="hin:HI_0332"/>
<dbReference type="PATRIC" id="fig|71421.8.peg.349"/>
<dbReference type="eggNOG" id="COG1381">
    <property type="taxonomic scope" value="Bacteria"/>
</dbReference>
<dbReference type="HOGENOM" id="CLU_066645_1_0_6"/>
<dbReference type="OrthoDB" id="9804792at2"/>
<dbReference type="PhylomeDB" id="P44642"/>
<dbReference type="BioCyc" id="HINF71421:G1GJ1-348-MONOMER"/>
<dbReference type="Proteomes" id="UP000000579">
    <property type="component" value="Chromosome"/>
</dbReference>
<dbReference type="GO" id="GO:0043590">
    <property type="term" value="C:bacterial nucleoid"/>
    <property type="evidence" value="ECO:0000318"/>
    <property type="project" value="GO_Central"/>
</dbReference>
<dbReference type="GO" id="GO:0006310">
    <property type="term" value="P:DNA recombination"/>
    <property type="evidence" value="ECO:0007669"/>
    <property type="project" value="UniProtKB-UniRule"/>
</dbReference>
<dbReference type="GO" id="GO:0006302">
    <property type="term" value="P:double-strand break repair"/>
    <property type="evidence" value="ECO:0000318"/>
    <property type="project" value="GO_Central"/>
</dbReference>
<dbReference type="Gene3D" id="2.40.50.140">
    <property type="entry name" value="Nucleic acid-binding proteins"/>
    <property type="match status" value="1"/>
</dbReference>
<dbReference type="Gene3D" id="1.20.1440.120">
    <property type="entry name" value="Recombination protein O, C-terminal domain"/>
    <property type="match status" value="1"/>
</dbReference>
<dbReference type="HAMAP" id="MF_00201">
    <property type="entry name" value="RecO"/>
    <property type="match status" value="1"/>
</dbReference>
<dbReference type="InterPro" id="IPR037278">
    <property type="entry name" value="ARFGAP/RecO"/>
</dbReference>
<dbReference type="InterPro" id="IPR022572">
    <property type="entry name" value="DNA_rep/recomb_RecO_N"/>
</dbReference>
<dbReference type="InterPro" id="IPR012340">
    <property type="entry name" value="NA-bd_OB-fold"/>
</dbReference>
<dbReference type="InterPro" id="IPR003717">
    <property type="entry name" value="RecO"/>
</dbReference>
<dbReference type="InterPro" id="IPR042242">
    <property type="entry name" value="RecO_C"/>
</dbReference>
<dbReference type="NCBIfam" id="TIGR00613">
    <property type="entry name" value="reco"/>
    <property type="match status" value="1"/>
</dbReference>
<dbReference type="PANTHER" id="PTHR33991">
    <property type="entry name" value="DNA REPAIR PROTEIN RECO"/>
    <property type="match status" value="1"/>
</dbReference>
<dbReference type="PANTHER" id="PTHR33991:SF1">
    <property type="entry name" value="DNA REPAIR PROTEIN RECO"/>
    <property type="match status" value="1"/>
</dbReference>
<dbReference type="Pfam" id="PF02565">
    <property type="entry name" value="RecO_C"/>
    <property type="match status" value="1"/>
</dbReference>
<dbReference type="Pfam" id="PF11967">
    <property type="entry name" value="RecO_N"/>
    <property type="match status" value="1"/>
</dbReference>
<dbReference type="SUPFAM" id="SSF57863">
    <property type="entry name" value="ArfGap/RecO-like zinc finger"/>
    <property type="match status" value="1"/>
</dbReference>
<dbReference type="SUPFAM" id="SSF50249">
    <property type="entry name" value="Nucleic acid-binding proteins"/>
    <property type="match status" value="1"/>
</dbReference>
<protein>
    <recommendedName>
        <fullName>DNA repair protein RecO</fullName>
    </recommendedName>
    <alternativeName>
        <fullName>Recombination protein O</fullName>
    </alternativeName>
</protein>
<feature type="chain" id="PRO_0000204958" description="DNA repair protein RecO">
    <location>
        <begin position="1"/>
        <end position="236"/>
    </location>
</feature>
<evidence type="ECO:0000250" key="1"/>
<evidence type="ECO:0000305" key="2"/>
<accession>P44642</accession>
<name>RECO_HAEIN</name>
<comment type="function">
    <text evidence="1">Involved in DNA repair and RecF pathway recombination.</text>
</comment>
<comment type="similarity">
    <text evidence="2">Belongs to the RecO family.</text>
</comment>
<sequence length="236" mass="26862">MQSELQRGFVLHRRPYSETSLLVDLFTEESGRLTVIAKGARAKRSSWKSVLQPFTPLLLRWTGKSTLKTLTKAEPAAITLPLQQIALYSGFYVNELLTRVIESETPNPALFQHYLKCLTGLATETNIEPTLRLFEFQLLQILGYGVDFLHCAGSGEPVDFSMTYRYREEKGFIASLVKDNLTFYGRDLLAFEALDFSDDAVRQAAKRFTRIALKPYLGDKPLKSRELFTQNILLLK</sequence>